<accession>Q9AIF4</accession>
<sequence>MAKKSLIQKNKLIFKNSKKNFKIIIIKNKLKKKFTFNLLLKIQSIKKKKLKTKFINRCYISGRTRSFYNRFSLNRNLIRKIGNFGYITGIEKSSW</sequence>
<organism>
    <name type="scientific">Carsonella ruddii</name>
    <dbReference type="NCBI Taxonomy" id="114186"/>
    <lineage>
        <taxon>Bacteria</taxon>
        <taxon>Pseudomonadati</taxon>
        <taxon>Pseudomonadota</taxon>
        <taxon>Gammaproteobacteria</taxon>
        <taxon>Oceanospirillales</taxon>
        <taxon>Halomonadaceae</taxon>
        <taxon>Zymobacter group</taxon>
        <taxon>Candidatus Carsonella</taxon>
    </lineage>
</organism>
<protein>
    <recommendedName>
        <fullName evidence="2">Small ribosomal subunit protein uS14</fullName>
    </recommendedName>
    <alternativeName>
        <fullName>30S ribosomal protein S14</fullName>
    </alternativeName>
</protein>
<dbReference type="EMBL" id="AF274444">
    <property type="protein sequence ID" value="AAK17092.1"/>
    <property type="molecule type" value="Genomic_DNA"/>
</dbReference>
<dbReference type="SMR" id="Q9AIF4"/>
<dbReference type="GO" id="GO:0005737">
    <property type="term" value="C:cytoplasm"/>
    <property type="evidence" value="ECO:0007669"/>
    <property type="project" value="UniProtKB-ARBA"/>
</dbReference>
<dbReference type="GO" id="GO:0015935">
    <property type="term" value="C:small ribosomal subunit"/>
    <property type="evidence" value="ECO:0007669"/>
    <property type="project" value="TreeGrafter"/>
</dbReference>
<dbReference type="GO" id="GO:0019843">
    <property type="term" value="F:rRNA binding"/>
    <property type="evidence" value="ECO:0007669"/>
    <property type="project" value="UniProtKB-KW"/>
</dbReference>
<dbReference type="GO" id="GO:0003735">
    <property type="term" value="F:structural constituent of ribosome"/>
    <property type="evidence" value="ECO:0007669"/>
    <property type="project" value="InterPro"/>
</dbReference>
<dbReference type="GO" id="GO:0006412">
    <property type="term" value="P:translation"/>
    <property type="evidence" value="ECO:0007669"/>
    <property type="project" value="InterPro"/>
</dbReference>
<dbReference type="Gene3D" id="1.10.287.1480">
    <property type="match status" value="1"/>
</dbReference>
<dbReference type="InterPro" id="IPR001209">
    <property type="entry name" value="Ribosomal_uS14"/>
</dbReference>
<dbReference type="PANTHER" id="PTHR19836">
    <property type="entry name" value="30S RIBOSOMAL PROTEIN S14"/>
    <property type="match status" value="1"/>
</dbReference>
<dbReference type="PANTHER" id="PTHR19836:SF19">
    <property type="entry name" value="SMALL RIBOSOMAL SUBUNIT PROTEIN US14M"/>
    <property type="match status" value="1"/>
</dbReference>
<dbReference type="Pfam" id="PF00253">
    <property type="entry name" value="Ribosomal_S14"/>
    <property type="match status" value="1"/>
</dbReference>
<dbReference type="SUPFAM" id="SSF57716">
    <property type="entry name" value="Glucocorticoid receptor-like (DNA-binding domain)"/>
    <property type="match status" value="1"/>
</dbReference>
<evidence type="ECO:0000250" key="1"/>
<evidence type="ECO:0000305" key="2"/>
<comment type="function">
    <text evidence="1">Binds 16S rRNA, required for the assembly of 30S particles and may also be responsible for determining the conformation of the 16S rRNA at the A site.</text>
</comment>
<comment type="subunit">
    <text evidence="1">Part of the 30S ribosomal subunit. Contacts proteins S3 and S10 (By similarity).</text>
</comment>
<comment type="similarity">
    <text evidence="2">Belongs to the universal ribosomal protein uS14 family.</text>
</comment>
<reference key="1">
    <citation type="journal article" date="2001" name="J. Bacteriol.">
        <title>Degenerative minimalism in the genome of a psyllid endosymbiont.</title>
        <authorList>
            <person name="Clark M.A."/>
            <person name="Baumann L."/>
            <person name="Thao M.L."/>
            <person name="Moran N.A."/>
            <person name="Baumann P."/>
        </authorList>
    </citation>
    <scope>NUCLEOTIDE SEQUENCE [GENOMIC DNA]</scope>
</reference>
<proteinExistence type="inferred from homology"/>
<feature type="chain" id="PRO_0000130882" description="Small ribosomal subunit protein uS14">
    <location>
        <begin position="1"/>
        <end position="95"/>
    </location>
</feature>
<name>RS14_CARRU</name>
<keyword id="KW-0687">Ribonucleoprotein</keyword>
<keyword id="KW-0689">Ribosomal protein</keyword>
<keyword id="KW-0694">RNA-binding</keyword>
<keyword id="KW-0699">rRNA-binding</keyword>
<gene>
    <name type="primary">rpsN</name>
    <name type="synonym">rps14</name>
</gene>